<gene>
    <name evidence="7" type="primary">Gpd2</name>
</gene>
<accession>P35571</accession>
<comment type="function">
    <text evidence="1">Calcium-responsive mitochondrial glycerol-3-phosphate dehydrogenase which seems to be a key component of the pancreatic beta-cell glucose-sensing device.</text>
</comment>
<comment type="catalytic activity">
    <reaction evidence="1">
        <text>a quinone + sn-glycerol 3-phosphate = dihydroxyacetone phosphate + a quinol</text>
        <dbReference type="Rhea" id="RHEA:18977"/>
        <dbReference type="ChEBI" id="CHEBI:24646"/>
        <dbReference type="ChEBI" id="CHEBI:57597"/>
        <dbReference type="ChEBI" id="CHEBI:57642"/>
        <dbReference type="ChEBI" id="CHEBI:132124"/>
        <dbReference type="EC" id="1.1.5.3"/>
    </reaction>
    <physiologicalReaction direction="left-to-right" evidence="1">
        <dbReference type="Rhea" id="RHEA:18978"/>
    </physiologicalReaction>
</comment>
<comment type="cofactor">
    <cofactor>
        <name>FAD</name>
        <dbReference type="ChEBI" id="CHEBI:57692"/>
    </cofactor>
</comment>
<comment type="activity regulation">
    <text evidence="1">Calcium-binding enhance the activity of the enzyme.</text>
</comment>
<comment type="pathway">
    <text>Polyol metabolism; glycerol degradation via glycerol kinase pathway; glycerone phosphate from sn-glycerol 3-phosphate (anaerobic route): step 1/1.</text>
</comment>
<comment type="subcellular location">
    <subcellularLocation>
        <location>Mitochondrion</location>
    </subcellularLocation>
</comment>
<comment type="similarity">
    <text evidence="6">Belongs to the FAD-dependent glycerol-3-phosphate dehydrogenase family.</text>
</comment>
<reference key="1">
    <citation type="journal article" date="1994" name="J. Biol. Chem.">
        <title>Sequence of rat mitochondrial glycerol-3-phosphate dehydrogenase cDNA. Evidence for EF-hand calcium-binding domains.</title>
        <authorList>
            <person name="Brown L.J."/>
            <person name="McDonald M.J."/>
            <person name="Lehn D.A."/>
            <person name="Moran S.M."/>
        </authorList>
    </citation>
    <scope>NUCLEOTIDE SEQUENCE [MRNA]</scope>
    <scope>PROTEIN SEQUENCE OF 43-58</scope>
    <source>
        <strain>Sprague-Dawley</strain>
        <tissue>Testis</tissue>
    </source>
</reference>
<reference key="2">
    <citation type="journal article" date="1994" name="Proc. Natl. Acad. Sci. U.S.A.">
        <title>Cloning of a cDNA for the FAD-linked glycerol-3-phosphate dehydrogenase from rat liver and its regulation by thyroid hormones.</title>
        <authorList>
            <person name="Mueller S."/>
            <person name="Seitz H.J."/>
        </authorList>
    </citation>
    <scope>NUCLEOTIDE SEQUENCE [MRNA]</scope>
    <source>
        <strain>Wistar</strain>
        <tissue>Liver</tissue>
    </source>
</reference>
<reference key="3">
    <citation type="journal article" date="2004" name="Genome Res.">
        <title>The status, quality, and expansion of the NIH full-length cDNA project: the Mammalian Gene Collection (MGC).</title>
        <authorList>
            <consortium name="The MGC Project Team"/>
        </authorList>
    </citation>
    <scope>NUCLEOTIDE SEQUENCE [LARGE SCALE MRNA]</scope>
    <source>
        <tissue>Testis</tissue>
    </source>
</reference>
<keyword id="KW-0106">Calcium</keyword>
<keyword id="KW-0903">Direct protein sequencing</keyword>
<keyword id="KW-0274">FAD</keyword>
<keyword id="KW-0285">Flavoprotein</keyword>
<keyword id="KW-0479">Metal-binding</keyword>
<keyword id="KW-0496">Mitochondrion</keyword>
<keyword id="KW-0560">Oxidoreductase</keyword>
<keyword id="KW-0597">Phosphoprotein</keyword>
<keyword id="KW-1185">Reference proteome</keyword>
<keyword id="KW-0677">Repeat</keyword>
<keyword id="KW-0809">Transit peptide</keyword>
<organism>
    <name type="scientific">Rattus norvegicus</name>
    <name type="common">Rat</name>
    <dbReference type="NCBI Taxonomy" id="10116"/>
    <lineage>
        <taxon>Eukaryota</taxon>
        <taxon>Metazoa</taxon>
        <taxon>Chordata</taxon>
        <taxon>Craniata</taxon>
        <taxon>Vertebrata</taxon>
        <taxon>Euteleostomi</taxon>
        <taxon>Mammalia</taxon>
        <taxon>Eutheria</taxon>
        <taxon>Euarchontoglires</taxon>
        <taxon>Glires</taxon>
        <taxon>Rodentia</taxon>
        <taxon>Myomorpha</taxon>
        <taxon>Muroidea</taxon>
        <taxon>Muridae</taxon>
        <taxon>Murinae</taxon>
        <taxon>Rattus</taxon>
    </lineage>
</organism>
<name>GPDM_RAT</name>
<protein>
    <recommendedName>
        <fullName>Glycerol-3-phosphate dehydrogenase, mitochondrial</fullName>
        <shortName>GPD-M</shortName>
        <shortName>GPDH-M</shortName>
        <ecNumber evidence="1">1.1.5.3</ecNumber>
    </recommendedName>
</protein>
<feature type="transit peptide" description="Mitochondrion" evidence="5">
    <location>
        <begin position="1"/>
        <end position="42"/>
    </location>
</feature>
<feature type="chain" id="PRO_0000010431" description="Glycerol-3-phosphate dehydrogenase, mitochondrial">
    <location>
        <begin position="43"/>
        <end position="727"/>
    </location>
</feature>
<feature type="domain" description="EF-hand 1" evidence="4">
    <location>
        <begin position="623"/>
        <end position="658"/>
    </location>
</feature>
<feature type="domain" description="EF-hand 2" evidence="4">
    <location>
        <begin position="659"/>
        <end position="694"/>
    </location>
</feature>
<feature type="binding site" evidence="3">
    <location>
        <begin position="71"/>
        <end position="99"/>
    </location>
    <ligand>
        <name>FAD</name>
        <dbReference type="ChEBI" id="CHEBI:57692"/>
    </ligand>
</feature>
<feature type="binding site" evidence="4">
    <location>
        <position position="672"/>
    </location>
    <ligand>
        <name>Ca(2+)</name>
        <dbReference type="ChEBI" id="CHEBI:29108"/>
    </ligand>
</feature>
<feature type="binding site" evidence="4">
    <location>
        <position position="674"/>
    </location>
    <ligand>
        <name>Ca(2+)</name>
        <dbReference type="ChEBI" id="CHEBI:29108"/>
    </ligand>
</feature>
<feature type="binding site" evidence="4">
    <location>
        <position position="676"/>
    </location>
    <ligand>
        <name>Ca(2+)</name>
        <dbReference type="ChEBI" id="CHEBI:29108"/>
    </ligand>
</feature>
<feature type="binding site" evidence="4">
    <location>
        <position position="678"/>
    </location>
    <ligand>
        <name>Ca(2+)</name>
        <dbReference type="ChEBI" id="CHEBI:29108"/>
    </ligand>
</feature>
<feature type="binding site" evidence="4">
    <location>
        <position position="683"/>
    </location>
    <ligand>
        <name>Ca(2+)</name>
        <dbReference type="ChEBI" id="CHEBI:29108"/>
    </ligand>
</feature>
<feature type="modified residue" description="Phosphotyrosine" evidence="2">
    <location>
        <position position="601"/>
    </location>
</feature>
<dbReference type="EC" id="1.1.5.3" evidence="1"/>
<dbReference type="EMBL" id="U08027">
    <property type="protein sequence ID" value="AAB60443.1"/>
    <property type="molecule type" value="mRNA"/>
</dbReference>
<dbReference type="EMBL" id="X78593">
    <property type="protein sequence ID" value="CAA55329.1"/>
    <property type="molecule type" value="mRNA"/>
</dbReference>
<dbReference type="EMBL" id="BC083565">
    <property type="protein sequence ID" value="AAH83565.1"/>
    <property type="molecule type" value="mRNA"/>
</dbReference>
<dbReference type="PIR" id="A54051">
    <property type="entry name" value="A54051"/>
</dbReference>
<dbReference type="RefSeq" id="NP_036868.1">
    <property type="nucleotide sequence ID" value="NM_012736.2"/>
</dbReference>
<dbReference type="RefSeq" id="XP_038960257.1">
    <property type="nucleotide sequence ID" value="XM_039104329.2"/>
</dbReference>
<dbReference type="RefSeq" id="XP_038960258.1">
    <property type="nucleotide sequence ID" value="XM_039104330.2"/>
</dbReference>
<dbReference type="RefSeq" id="XP_038960259.1">
    <property type="nucleotide sequence ID" value="XM_039104331.2"/>
</dbReference>
<dbReference type="RefSeq" id="XP_063139207.1">
    <property type="nucleotide sequence ID" value="XM_063283137.1"/>
</dbReference>
<dbReference type="SMR" id="P35571"/>
<dbReference type="BioGRID" id="247139">
    <property type="interactions" value="2"/>
</dbReference>
<dbReference type="FunCoup" id="P35571">
    <property type="interactions" value="2113"/>
</dbReference>
<dbReference type="IntAct" id="P35571">
    <property type="interactions" value="2"/>
</dbReference>
<dbReference type="MINT" id="P35571"/>
<dbReference type="STRING" id="10116.ENSRNOP00000043749"/>
<dbReference type="iPTMnet" id="P35571"/>
<dbReference type="PhosphoSitePlus" id="P35571"/>
<dbReference type="SwissPalm" id="P35571"/>
<dbReference type="jPOST" id="P35571"/>
<dbReference type="PaxDb" id="10116-ENSRNOP00000043749"/>
<dbReference type="GeneID" id="25062"/>
<dbReference type="KEGG" id="rno:25062"/>
<dbReference type="UCSC" id="RGD:2726">
    <property type="organism name" value="rat"/>
</dbReference>
<dbReference type="AGR" id="RGD:2726"/>
<dbReference type="CTD" id="2820"/>
<dbReference type="RGD" id="2726">
    <property type="gene designation" value="Gpd2"/>
</dbReference>
<dbReference type="eggNOG" id="KOG0042">
    <property type="taxonomic scope" value="Eukaryota"/>
</dbReference>
<dbReference type="InParanoid" id="P35571"/>
<dbReference type="PhylomeDB" id="P35571"/>
<dbReference type="BRENDA" id="1.1.5.3">
    <property type="organism ID" value="5301"/>
</dbReference>
<dbReference type="Reactome" id="R-RNO-1483166">
    <property type="pathway name" value="Synthesis of PA"/>
</dbReference>
<dbReference type="Reactome" id="R-RNO-163560">
    <property type="pathway name" value="Triglyceride catabolism"/>
</dbReference>
<dbReference type="UniPathway" id="UPA00618">
    <property type="reaction ID" value="UER00673"/>
</dbReference>
<dbReference type="PRO" id="PR:P35571"/>
<dbReference type="Proteomes" id="UP000002494">
    <property type="component" value="Unplaced"/>
</dbReference>
<dbReference type="GO" id="GO:0005743">
    <property type="term" value="C:mitochondrial inner membrane"/>
    <property type="evidence" value="ECO:0000266"/>
    <property type="project" value="RGD"/>
</dbReference>
<dbReference type="GO" id="GO:0005739">
    <property type="term" value="C:mitochondrion"/>
    <property type="evidence" value="ECO:0000318"/>
    <property type="project" value="GO_Central"/>
</dbReference>
<dbReference type="GO" id="GO:0005509">
    <property type="term" value="F:calcium ion binding"/>
    <property type="evidence" value="ECO:0007669"/>
    <property type="project" value="InterPro"/>
</dbReference>
<dbReference type="GO" id="GO:0004368">
    <property type="term" value="F:glycerol-3-phosphate dehydrogenase (quinone) activity"/>
    <property type="evidence" value="ECO:0000250"/>
    <property type="project" value="UniProtKB"/>
</dbReference>
<dbReference type="GO" id="GO:0043010">
    <property type="term" value="P:camera-type eye development"/>
    <property type="evidence" value="ECO:0000266"/>
    <property type="project" value="RGD"/>
</dbReference>
<dbReference type="GO" id="GO:0006094">
    <property type="term" value="P:gluconeogenesis"/>
    <property type="evidence" value="ECO:0000266"/>
    <property type="project" value="RGD"/>
</dbReference>
<dbReference type="GO" id="GO:0019563">
    <property type="term" value="P:glycerol catabolic process"/>
    <property type="evidence" value="ECO:0007669"/>
    <property type="project" value="UniProtKB-UniPathway"/>
</dbReference>
<dbReference type="GO" id="GO:0006072">
    <property type="term" value="P:glycerol-3-phosphate metabolic process"/>
    <property type="evidence" value="ECO:0000314"/>
    <property type="project" value="RGD"/>
</dbReference>
<dbReference type="GO" id="GO:0006127">
    <property type="term" value="P:glycerol-3-phosphate shuttle"/>
    <property type="evidence" value="ECO:0000266"/>
    <property type="project" value="RGD"/>
</dbReference>
<dbReference type="GO" id="GO:0035264">
    <property type="term" value="P:multicellular organism growth"/>
    <property type="evidence" value="ECO:0000266"/>
    <property type="project" value="RGD"/>
</dbReference>
<dbReference type="GO" id="GO:0006734">
    <property type="term" value="P:NADH metabolic process"/>
    <property type="evidence" value="ECO:0000314"/>
    <property type="project" value="RGD"/>
</dbReference>
<dbReference type="CDD" id="cd00051">
    <property type="entry name" value="EFh"/>
    <property type="match status" value="1"/>
</dbReference>
<dbReference type="FunFam" id="1.10.8.870:FF:000001">
    <property type="entry name" value="Glycerol-3-phosphate dehydrogenase"/>
    <property type="match status" value="1"/>
</dbReference>
<dbReference type="FunFam" id="3.30.9.10:FF:000037">
    <property type="entry name" value="Glycerol-3-phosphate dehydrogenase"/>
    <property type="match status" value="1"/>
</dbReference>
<dbReference type="FunFam" id="1.10.238.10:FF:000539">
    <property type="entry name" value="Glycerol-3-phosphate dehydrogenase, mitochondrial"/>
    <property type="match status" value="1"/>
</dbReference>
<dbReference type="Gene3D" id="1.10.8.870">
    <property type="entry name" value="Alpha-glycerophosphate oxidase, cap domain"/>
    <property type="match status" value="1"/>
</dbReference>
<dbReference type="Gene3D" id="3.30.9.10">
    <property type="entry name" value="D-Amino Acid Oxidase, subunit A, domain 2"/>
    <property type="match status" value="1"/>
</dbReference>
<dbReference type="Gene3D" id="1.10.238.10">
    <property type="entry name" value="EF-hand"/>
    <property type="match status" value="1"/>
</dbReference>
<dbReference type="Gene3D" id="3.50.50.60">
    <property type="entry name" value="FAD/NAD(P)-binding domain"/>
    <property type="match status" value="1"/>
</dbReference>
<dbReference type="InterPro" id="IPR031656">
    <property type="entry name" value="DAO_C"/>
</dbReference>
<dbReference type="InterPro" id="IPR038299">
    <property type="entry name" value="DAO_C_sf"/>
</dbReference>
<dbReference type="InterPro" id="IPR011992">
    <property type="entry name" value="EF-hand-dom_pair"/>
</dbReference>
<dbReference type="InterPro" id="IPR018247">
    <property type="entry name" value="EF_Hand_1_Ca_BS"/>
</dbReference>
<dbReference type="InterPro" id="IPR002048">
    <property type="entry name" value="EF_hand_dom"/>
</dbReference>
<dbReference type="InterPro" id="IPR006076">
    <property type="entry name" value="FAD-dep_OxRdtase"/>
</dbReference>
<dbReference type="InterPro" id="IPR036188">
    <property type="entry name" value="FAD/NAD-bd_sf"/>
</dbReference>
<dbReference type="InterPro" id="IPR000447">
    <property type="entry name" value="G3P_DH_FAD-dep"/>
</dbReference>
<dbReference type="PANTHER" id="PTHR11985">
    <property type="entry name" value="GLYCEROL-3-PHOSPHATE DEHYDROGENASE"/>
    <property type="match status" value="1"/>
</dbReference>
<dbReference type="PANTHER" id="PTHR11985:SF15">
    <property type="entry name" value="GLYCEROL-3-PHOSPHATE DEHYDROGENASE, MITOCHONDRIAL"/>
    <property type="match status" value="1"/>
</dbReference>
<dbReference type="Pfam" id="PF01266">
    <property type="entry name" value="DAO"/>
    <property type="match status" value="1"/>
</dbReference>
<dbReference type="Pfam" id="PF16901">
    <property type="entry name" value="DAO_C"/>
    <property type="match status" value="1"/>
</dbReference>
<dbReference type="Pfam" id="PF13499">
    <property type="entry name" value="EF-hand_7"/>
    <property type="match status" value="1"/>
</dbReference>
<dbReference type="PRINTS" id="PR01001">
    <property type="entry name" value="FADG3PDH"/>
</dbReference>
<dbReference type="SMART" id="SM00054">
    <property type="entry name" value="EFh"/>
    <property type="match status" value="2"/>
</dbReference>
<dbReference type="SUPFAM" id="SSF47473">
    <property type="entry name" value="EF-hand"/>
    <property type="match status" value="1"/>
</dbReference>
<dbReference type="SUPFAM" id="SSF54373">
    <property type="entry name" value="FAD-linked reductases, C-terminal domain"/>
    <property type="match status" value="1"/>
</dbReference>
<dbReference type="SUPFAM" id="SSF51905">
    <property type="entry name" value="FAD/NAD(P)-binding domain"/>
    <property type="match status" value="1"/>
</dbReference>
<dbReference type="PROSITE" id="PS00018">
    <property type="entry name" value="EF_HAND_1"/>
    <property type="match status" value="1"/>
</dbReference>
<dbReference type="PROSITE" id="PS50222">
    <property type="entry name" value="EF_HAND_2"/>
    <property type="match status" value="2"/>
</dbReference>
<dbReference type="PROSITE" id="PS00977">
    <property type="entry name" value="FAD_G3PDH_1"/>
    <property type="match status" value="1"/>
</dbReference>
<dbReference type="PROSITE" id="PS00978">
    <property type="entry name" value="FAD_G3PDH_2"/>
    <property type="match status" value="1"/>
</dbReference>
<sequence>MAFQKVVKGTILMGGGALATVLGLSQFAHYRRKQVSLAYVEAATCFSEPVNREPPSREAQLMTLQNTSEFDILVIGGGATGCGCALDAVTRGLKTALVERNDFASGTSSRSTKLIHGGVRYLQKAITNLDVEQYRMVKEALHERANLLEIAPHLSAPLPIMLPLYKWWQLPYYWVGIKMYDLVAGSHCLKSSYVLSKSRALEHFPMLQKDKLVGAIVYYDGQHNDARMNLAIALTAARYGAATANYMEVVSLLKKTDPETGKERVSGARCKDVLTGHEFNVRAKCVINATGPFTDSVRKMDDNDVVPICQPSAGVHIVMPGYYSPENMGLLDPATSDGRVIFFLPWEKMTIAGTTDSPTDVTHHPIPSEDDINFILNEVRNYLSCDVEVRRGDVLAAWSGIRPLVTDPKSANTQSISRNHVVEVSDSGLITIAGGKWTTYRSMAEDTVNKAVKLHNLNAGPSRTVGLFLQGGKDWSPTLYIRLVQDYGLESEVAQHLAKTYGDKAFDVAKMASVTGKRWPVVGVRLVSEFPYIEAEVKYGIKEYACTAVDMISRRTRLAFLNVQAAEEALPKIVELMGRELNWSELRKQEELETATRFLYYEMGYKSRTEQLTDSTEISLLPPDIDRYKKRFHMFDEDEKGFITIVDVQRVLESINVQMDEDTLHEILCEVDLNKNGQVELHEFLQLMSAVHTGRVSGSRLAILMKTAEENLDRRVPIPVDRSCGGL</sequence>
<proteinExistence type="evidence at protein level"/>
<evidence type="ECO:0000250" key="1">
    <source>
        <dbReference type="UniProtKB" id="P43304"/>
    </source>
</evidence>
<evidence type="ECO:0000250" key="2">
    <source>
        <dbReference type="UniProtKB" id="Q64521"/>
    </source>
</evidence>
<evidence type="ECO:0000255" key="3"/>
<evidence type="ECO:0000255" key="4">
    <source>
        <dbReference type="PROSITE-ProRule" id="PRU00448"/>
    </source>
</evidence>
<evidence type="ECO:0000269" key="5">
    <source>
    </source>
</evidence>
<evidence type="ECO:0000305" key="6"/>
<evidence type="ECO:0000312" key="7">
    <source>
        <dbReference type="RGD" id="2726"/>
    </source>
</evidence>